<gene>
    <name type="primary">yuiB</name>
    <name type="ordered locus">BSU32080</name>
</gene>
<protein>
    <recommendedName>
        <fullName>Uncharacterized membrane protein YuiB</fullName>
    </recommendedName>
</protein>
<feature type="chain" id="PRO_0000370267" description="Uncharacterized membrane protein YuiB">
    <location>
        <begin position="1"/>
        <end position="106"/>
    </location>
</feature>
<feature type="transmembrane region" description="Helical" evidence="1">
    <location>
        <begin position="4"/>
        <end position="24"/>
    </location>
</feature>
<feature type="transmembrane region" description="Helical" evidence="1">
    <location>
        <begin position="27"/>
        <end position="47"/>
    </location>
</feature>
<feature type="transmembrane region" description="Helical" evidence="1">
    <location>
        <begin position="78"/>
        <end position="98"/>
    </location>
</feature>
<proteinExistence type="predicted"/>
<evidence type="ECO:0000255" key="1"/>
<evidence type="ECO:0000305" key="2"/>
<accession>O32109</accession>
<comment type="subcellular location">
    <subcellularLocation>
        <location evidence="2">Cell membrane</location>
        <topology evidence="2">Multi-pass membrane protein</topology>
    </subcellularLocation>
</comment>
<sequence>MISLPVVIISIVLFFVLFFGIGFLLNMLLRMSWIMAVIYPIVCLFIISKEKLISYVQSPGESFASLFHRVLSLAAADVLILVSGLAGAIVSGIAINMLRKRGYQMF</sequence>
<keyword id="KW-1003">Cell membrane</keyword>
<keyword id="KW-0472">Membrane</keyword>
<keyword id="KW-1185">Reference proteome</keyword>
<keyword id="KW-0812">Transmembrane</keyword>
<keyword id="KW-1133">Transmembrane helix</keyword>
<organism>
    <name type="scientific">Bacillus subtilis (strain 168)</name>
    <dbReference type="NCBI Taxonomy" id="224308"/>
    <lineage>
        <taxon>Bacteria</taxon>
        <taxon>Bacillati</taxon>
        <taxon>Bacillota</taxon>
        <taxon>Bacilli</taxon>
        <taxon>Bacillales</taxon>
        <taxon>Bacillaceae</taxon>
        <taxon>Bacillus</taxon>
    </lineage>
</organism>
<reference key="1">
    <citation type="journal article" date="1997" name="Nature">
        <title>The complete genome sequence of the Gram-positive bacterium Bacillus subtilis.</title>
        <authorList>
            <person name="Kunst F."/>
            <person name="Ogasawara N."/>
            <person name="Moszer I."/>
            <person name="Albertini A.M."/>
            <person name="Alloni G."/>
            <person name="Azevedo V."/>
            <person name="Bertero M.G."/>
            <person name="Bessieres P."/>
            <person name="Bolotin A."/>
            <person name="Borchert S."/>
            <person name="Borriss R."/>
            <person name="Boursier L."/>
            <person name="Brans A."/>
            <person name="Braun M."/>
            <person name="Brignell S.C."/>
            <person name="Bron S."/>
            <person name="Brouillet S."/>
            <person name="Bruschi C.V."/>
            <person name="Caldwell B."/>
            <person name="Capuano V."/>
            <person name="Carter N.M."/>
            <person name="Choi S.-K."/>
            <person name="Codani J.-J."/>
            <person name="Connerton I.F."/>
            <person name="Cummings N.J."/>
            <person name="Daniel R.A."/>
            <person name="Denizot F."/>
            <person name="Devine K.M."/>
            <person name="Duesterhoeft A."/>
            <person name="Ehrlich S.D."/>
            <person name="Emmerson P.T."/>
            <person name="Entian K.-D."/>
            <person name="Errington J."/>
            <person name="Fabret C."/>
            <person name="Ferrari E."/>
            <person name="Foulger D."/>
            <person name="Fritz C."/>
            <person name="Fujita M."/>
            <person name="Fujita Y."/>
            <person name="Fuma S."/>
            <person name="Galizzi A."/>
            <person name="Galleron N."/>
            <person name="Ghim S.-Y."/>
            <person name="Glaser P."/>
            <person name="Goffeau A."/>
            <person name="Golightly E.J."/>
            <person name="Grandi G."/>
            <person name="Guiseppi G."/>
            <person name="Guy B.J."/>
            <person name="Haga K."/>
            <person name="Haiech J."/>
            <person name="Harwood C.R."/>
            <person name="Henaut A."/>
            <person name="Hilbert H."/>
            <person name="Holsappel S."/>
            <person name="Hosono S."/>
            <person name="Hullo M.-F."/>
            <person name="Itaya M."/>
            <person name="Jones L.-M."/>
            <person name="Joris B."/>
            <person name="Karamata D."/>
            <person name="Kasahara Y."/>
            <person name="Klaerr-Blanchard M."/>
            <person name="Klein C."/>
            <person name="Kobayashi Y."/>
            <person name="Koetter P."/>
            <person name="Koningstein G."/>
            <person name="Krogh S."/>
            <person name="Kumano M."/>
            <person name="Kurita K."/>
            <person name="Lapidus A."/>
            <person name="Lardinois S."/>
            <person name="Lauber J."/>
            <person name="Lazarevic V."/>
            <person name="Lee S.-M."/>
            <person name="Levine A."/>
            <person name="Liu H."/>
            <person name="Masuda S."/>
            <person name="Mauel C."/>
            <person name="Medigue C."/>
            <person name="Medina N."/>
            <person name="Mellado R.P."/>
            <person name="Mizuno M."/>
            <person name="Moestl D."/>
            <person name="Nakai S."/>
            <person name="Noback M."/>
            <person name="Noone D."/>
            <person name="O'Reilly M."/>
            <person name="Ogawa K."/>
            <person name="Ogiwara A."/>
            <person name="Oudega B."/>
            <person name="Park S.-H."/>
            <person name="Parro V."/>
            <person name="Pohl T.M."/>
            <person name="Portetelle D."/>
            <person name="Porwollik S."/>
            <person name="Prescott A.M."/>
            <person name="Presecan E."/>
            <person name="Pujic P."/>
            <person name="Purnelle B."/>
            <person name="Rapoport G."/>
            <person name="Rey M."/>
            <person name="Reynolds S."/>
            <person name="Rieger M."/>
            <person name="Rivolta C."/>
            <person name="Rocha E."/>
            <person name="Roche B."/>
            <person name="Rose M."/>
            <person name="Sadaie Y."/>
            <person name="Sato T."/>
            <person name="Scanlan E."/>
            <person name="Schleich S."/>
            <person name="Schroeter R."/>
            <person name="Scoffone F."/>
            <person name="Sekiguchi J."/>
            <person name="Sekowska A."/>
            <person name="Seror S.J."/>
            <person name="Serror P."/>
            <person name="Shin B.-S."/>
            <person name="Soldo B."/>
            <person name="Sorokin A."/>
            <person name="Tacconi E."/>
            <person name="Takagi T."/>
            <person name="Takahashi H."/>
            <person name="Takemaru K."/>
            <person name="Takeuchi M."/>
            <person name="Tamakoshi A."/>
            <person name="Tanaka T."/>
            <person name="Terpstra P."/>
            <person name="Tognoni A."/>
            <person name="Tosato V."/>
            <person name="Uchiyama S."/>
            <person name="Vandenbol M."/>
            <person name="Vannier F."/>
            <person name="Vassarotti A."/>
            <person name="Viari A."/>
            <person name="Wambutt R."/>
            <person name="Wedler E."/>
            <person name="Wedler H."/>
            <person name="Weitzenegger T."/>
            <person name="Winters P."/>
            <person name="Wipat A."/>
            <person name="Yamamoto H."/>
            <person name="Yamane K."/>
            <person name="Yasumoto K."/>
            <person name="Yata K."/>
            <person name="Yoshida K."/>
            <person name="Yoshikawa H.-F."/>
            <person name="Zumstein E."/>
            <person name="Yoshikawa H."/>
            <person name="Danchin A."/>
        </authorList>
    </citation>
    <scope>NUCLEOTIDE SEQUENCE [LARGE SCALE GENOMIC DNA]</scope>
    <source>
        <strain>168</strain>
    </source>
</reference>
<dbReference type="EMBL" id="AL009126">
    <property type="protein sequence ID" value="CAB15198.1"/>
    <property type="molecule type" value="Genomic_DNA"/>
</dbReference>
<dbReference type="PIR" id="C70012">
    <property type="entry name" value="C70012"/>
</dbReference>
<dbReference type="RefSeq" id="NP_391088.1">
    <property type="nucleotide sequence ID" value="NC_000964.3"/>
</dbReference>
<dbReference type="RefSeq" id="WP_003243877.1">
    <property type="nucleotide sequence ID" value="NZ_OZ025638.1"/>
</dbReference>
<dbReference type="FunCoup" id="O32109">
    <property type="interactions" value="35"/>
</dbReference>
<dbReference type="STRING" id="224308.BSU32080"/>
<dbReference type="PaxDb" id="224308-BSU32080"/>
<dbReference type="EnsemblBacteria" id="CAB15198">
    <property type="protein sequence ID" value="CAB15198"/>
    <property type="gene ID" value="BSU_32080"/>
</dbReference>
<dbReference type="GeneID" id="938035"/>
<dbReference type="KEGG" id="bsu:BSU32080"/>
<dbReference type="PATRIC" id="fig|224308.179.peg.3474"/>
<dbReference type="eggNOG" id="ENOG5032RYS">
    <property type="taxonomic scope" value="Bacteria"/>
</dbReference>
<dbReference type="InParanoid" id="O32109"/>
<dbReference type="OrthoDB" id="2382309at2"/>
<dbReference type="BioCyc" id="BSUB:BSU32080-MONOMER"/>
<dbReference type="Proteomes" id="UP000001570">
    <property type="component" value="Chromosome"/>
</dbReference>
<dbReference type="GO" id="GO:0005886">
    <property type="term" value="C:plasma membrane"/>
    <property type="evidence" value="ECO:0007669"/>
    <property type="project" value="UniProtKB-SubCell"/>
</dbReference>
<dbReference type="InterPro" id="IPR025917">
    <property type="entry name" value="YuiB"/>
</dbReference>
<dbReference type="Pfam" id="PF14068">
    <property type="entry name" value="YuiB"/>
    <property type="match status" value="1"/>
</dbReference>
<name>YUIB_BACSU</name>